<name>MATK_SULSU</name>
<feature type="chain" id="PRO_0000143726" description="Maturase K">
    <location>
        <begin position="1"/>
        <end position="506"/>
    </location>
</feature>
<accession>P36436</accession>
<dbReference type="EMBL" id="L34113">
    <property type="protein sequence ID" value="AAA84655.1"/>
    <property type="molecule type" value="Genomic_DNA"/>
</dbReference>
<dbReference type="EMBL" id="L20130">
    <property type="protein sequence ID" value="AAA84654.1"/>
    <property type="molecule type" value="Genomic_DNA"/>
</dbReference>
<dbReference type="GO" id="GO:0009507">
    <property type="term" value="C:chloroplast"/>
    <property type="evidence" value="ECO:0007669"/>
    <property type="project" value="UniProtKB-SubCell"/>
</dbReference>
<dbReference type="GO" id="GO:0003723">
    <property type="term" value="F:RNA binding"/>
    <property type="evidence" value="ECO:0007669"/>
    <property type="project" value="UniProtKB-KW"/>
</dbReference>
<dbReference type="GO" id="GO:0006397">
    <property type="term" value="P:mRNA processing"/>
    <property type="evidence" value="ECO:0007669"/>
    <property type="project" value="UniProtKB-KW"/>
</dbReference>
<dbReference type="GO" id="GO:0008380">
    <property type="term" value="P:RNA splicing"/>
    <property type="evidence" value="ECO:0007669"/>
    <property type="project" value="UniProtKB-UniRule"/>
</dbReference>
<dbReference type="GO" id="GO:0008033">
    <property type="term" value="P:tRNA processing"/>
    <property type="evidence" value="ECO:0007669"/>
    <property type="project" value="UniProtKB-KW"/>
</dbReference>
<dbReference type="HAMAP" id="MF_01390">
    <property type="entry name" value="MatK"/>
    <property type="match status" value="1"/>
</dbReference>
<dbReference type="InterPro" id="IPR024937">
    <property type="entry name" value="Domain_X"/>
</dbReference>
<dbReference type="InterPro" id="IPR002866">
    <property type="entry name" value="Maturase_MatK"/>
</dbReference>
<dbReference type="InterPro" id="IPR024942">
    <property type="entry name" value="Maturase_MatK_N"/>
</dbReference>
<dbReference type="PANTHER" id="PTHR34811">
    <property type="entry name" value="MATURASE K"/>
    <property type="match status" value="1"/>
</dbReference>
<dbReference type="PANTHER" id="PTHR34811:SF1">
    <property type="entry name" value="MATURASE K"/>
    <property type="match status" value="1"/>
</dbReference>
<dbReference type="Pfam" id="PF01348">
    <property type="entry name" value="Intron_maturas2"/>
    <property type="match status" value="1"/>
</dbReference>
<dbReference type="Pfam" id="PF01824">
    <property type="entry name" value="MatK_N"/>
    <property type="match status" value="1"/>
</dbReference>
<evidence type="ECO:0000255" key="1">
    <source>
        <dbReference type="HAMAP-Rule" id="MF_01390"/>
    </source>
</evidence>
<organism>
    <name type="scientific">Sullivantia sullivantii</name>
    <name type="common">Sullivant's coolwort</name>
    <name type="synonym">Saxifraga sullivantii</name>
    <dbReference type="NCBI Taxonomy" id="23271"/>
    <lineage>
        <taxon>Eukaryota</taxon>
        <taxon>Viridiplantae</taxon>
        <taxon>Streptophyta</taxon>
        <taxon>Embryophyta</taxon>
        <taxon>Tracheophyta</taxon>
        <taxon>Spermatophyta</taxon>
        <taxon>Magnoliopsida</taxon>
        <taxon>eudicotyledons</taxon>
        <taxon>Gunneridae</taxon>
        <taxon>Pentapetalae</taxon>
        <taxon>Saxifragales</taxon>
        <taxon>Saxifragaceae</taxon>
        <taxon>Boykinieae</taxon>
        <taxon>Sullivantia</taxon>
    </lineage>
</organism>
<comment type="function">
    <text evidence="1">Usually encoded in the trnK tRNA gene intron. Probably assists in splicing its own and other chloroplast group II introns.</text>
</comment>
<comment type="subcellular location">
    <subcellularLocation>
        <location>Plastid</location>
        <location>Chloroplast</location>
    </subcellularLocation>
</comment>
<comment type="similarity">
    <text evidence="1">Belongs to the intron maturase 2 family. MatK subfamily.</text>
</comment>
<gene>
    <name evidence="1" type="primary">matK</name>
    <name type="synonym">ycf14</name>
</gene>
<geneLocation type="chloroplast"/>
<reference key="1">
    <citation type="journal article" date="1994" name="Syst. Bot.">
        <title>matK DNA sequences and phylogenetic reconstruction in Saxifragaceae sensu stricto.</title>
        <authorList>
            <person name="Johnson L.A."/>
            <person name="Soltis D.E."/>
        </authorList>
        <dbReference type="AGRICOLA" id="IND20396215"/>
    </citation>
    <scope>NUCLEOTIDE SEQUENCE [GENOMIC DNA]</scope>
    <source>
        <tissue>Leaf</tissue>
    </source>
</reference>
<keyword id="KW-0150">Chloroplast</keyword>
<keyword id="KW-0507">mRNA processing</keyword>
<keyword id="KW-0934">Plastid</keyword>
<keyword id="KW-0694">RNA-binding</keyword>
<keyword id="KW-0819">tRNA processing</keyword>
<proteinExistence type="inferred from homology"/>
<sequence>MGEFQGYLELDKFRQHHFLYPLIFQEYIYALAHDHVLNRSILLDNFGYDNKSSSIIVKRLITRMGQQNHLLISANYSNKNKFLGHNKNFDSQMISEGFAVIVEIPFSLRLVSSLERKEIVKSHNLRSIHSIFPFLEDNFLHLNYVSDILIPHPIHLEILVQTLRYWVKDASSLHLLRFFLYEYQSWNSLITPTPKKSISIVSQRNQRLFLFLYNSYVCEYESTFIFLWNQSSHLQSTSYGTLFERIYFYGKIKHLVEVFSNDFPTAPWLFKDPFMHYIRYQGKSILASKGTPLLLNKWKYYLVNFWQCHYYVWSQSGRIHINQLSNHSLDFLGYLSSVRLNPSVVRNQMLENSFIIDNAIKKFDIIVPILPLIRSLAKAKFCNVVGDPISKPSWAESSDSDIIDRFVRICRNISHYHSGASKKKSLYRIKYILRLSCARTLARKHKSTVRAFLKRLGSGLLEEFLTEDEQALSLIFPRASSTLWRLYRGRIWYLDIICINDLVNHE</sequence>
<protein>
    <recommendedName>
        <fullName evidence="1">Maturase K</fullName>
    </recommendedName>
    <alternativeName>
        <fullName evidence="1">Intron maturase</fullName>
    </alternativeName>
</protein>